<dbReference type="EC" id="4.99.1.12" evidence="1"/>
<dbReference type="EMBL" id="CP000568">
    <property type="protein sequence ID" value="ABN51607.1"/>
    <property type="molecule type" value="Genomic_DNA"/>
</dbReference>
<dbReference type="RefSeq" id="WP_003512650.1">
    <property type="nucleotide sequence ID" value="NC_009012.1"/>
</dbReference>
<dbReference type="SMR" id="A3DCC8"/>
<dbReference type="STRING" id="203119.Cthe_0369"/>
<dbReference type="GeneID" id="35805626"/>
<dbReference type="KEGG" id="cth:Cthe_0369"/>
<dbReference type="eggNOG" id="COG1641">
    <property type="taxonomic scope" value="Bacteria"/>
</dbReference>
<dbReference type="HOGENOM" id="CLU_028523_2_1_9"/>
<dbReference type="OrthoDB" id="9765625at2"/>
<dbReference type="Proteomes" id="UP000002145">
    <property type="component" value="Chromosome"/>
</dbReference>
<dbReference type="GO" id="GO:0016829">
    <property type="term" value="F:lyase activity"/>
    <property type="evidence" value="ECO:0007669"/>
    <property type="project" value="UniProtKB-UniRule"/>
</dbReference>
<dbReference type="GO" id="GO:0016151">
    <property type="term" value="F:nickel cation binding"/>
    <property type="evidence" value="ECO:0007669"/>
    <property type="project" value="UniProtKB-UniRule"/>
</dbReference>
<dbReference type="GO" id="GO:0051604">
    <property type="term" value="P:protein maturation"/>
    <property type="evidence" value="ECO:0007669"/>
    <property type="project" value="UniProtKB-UniRule"/>
</dbReference>
<dbReference type="Gene3D" id="3.10.20.300">
    <property type="entry name" value="mk0293 like domain"/>
    <property type="match status" value="1"/>
</dbReference>
<dbReference type="Gene3D" id="3.30.70.1380">
    <property type="entry name" value="Transcriptional regulatory protein pf0864 domain like"/>
    <property type="match status" value="1"/>
</dbReference>
<dbReference type="HAMAP" id="MF_01074">
    <property type="entry name" value="LarC"/>
    <property type="match status" value="1"/>
</dbReference>
<dbReference type="InterPro" id="IPR002822">
    <property type="entry name" value="Ni_insertion"/>
</dbReference>
<dbReference type="NCBIfam" id="TIGR00299">
    <property type="entry name" value="nickel pincer cofactor biosynthesis protein LarC"/>
    <property type="match status" value="1"/>
</dbReference>
<dbReference type="PANTHER" id="PTHR36566">
    <property type="entry name" value="NICKEL INSERTION PROTEIN-RELATED"/>
    <property type="match status" value="1"/>
</dbReference>
<dbReference type="PANTHER" id="PTHR36566:SF1">
    <property type="entry name" value="PYRIDINIUM-3,5-BISTHIOCARBOXYLIC ACID MONONUCLEOTIDE NICKEL INSERTION PROTEIN"/>
    <property type="match status" value="1"/>
</dbReference>
<dbReference type="Pfam" id="PF01969">
    <property type="entry name" value="Ni_insertion"/>
    <property type="match status" value="1"/>
</dbReference>
<feature type="chain" id="PRO_1000064645" description="Pyridinium-3,5-bisthiocarboxylic acid mononucleotide nickel insertion protein">
    <location>
        <begin position="1"/>
        <end position="407"/>
    </location>
</feature>
<comment type="function">
    <text evidence="1">Involved in the biosynthesis of a nickel-pincer cofactor ((SCS)Ni(II) pincer complex). Binds Ni(2+), and functions in nickel delivery to pyridinium-3,5-bisthiocarboxylic acid mononucleotide (P2TMN), to form the mature cofactor. Is thus probably required for the activation of nickel-pincer cofactor-dependent enzymes.</text>
</comment>
<comment type="catalytic activity">
    <reaction evidence="1">
        <text>Ni(II)-pyridinium-3,5-bisthiocarboxylate mononucleotide = pyridinium-3,5-bisthiocarboxylate mononucleotide + Ni(2+)</text>
        <dbReference type="Rhea" id="RHEA:54784"/>
        <dbReference type="ChEBI" id="CHEBI:49786"/>
        <dbReference type="ChEBI" id="CHEBI:137372"/>
        <dbReference type="ChEBI" id="CHEBI:137373"/>
        <dbReference type="EC" id="4.99.1.12"/>
    </reaction>
</comment>
<comment type="similarity">
    <text evidence="1">Belongs to the LarC family.</text>
</comment>
<name>LARC_ACET2</name>
<keyword id="KW-0456">Lyase</keyword>
<keyword id="KW-0533">Nickel</keyword>
<keyword id="KW-1185">Reference proteome</keyword>
<accession>A3DCC8</accession>
<sequence>MRILYFDCFAGASGDMILGALLDLGIDVGIFKRELAGLNLDGFDIAVEKKVINSIAVTDVNVIVKEECNHHTGHHHHCERNLADIEKIIDESSLKDNVKRLSKKIFSEIARAEAKVHNKSIEDVHFHEVGAIDSIVDIVGTAICLDLLKVDKIYSSPMHDGTGFIECQHGKLPVPVPAVLEMLKESNIPYITEDVNTELLTPTGLGIIKCVASKFGPMPPMTIEKVGYGAGKRQTGRFNALRCILGNAKEKEKIDDEICMLETNIDDMNPEILGYVMNRLFENGALDVFYTPVYMKKNRPGVLLTVLTDKEHEEKLVDIILTETTTLGIRKTTAQRYVLEREIKHVNTEFGKIRVKESSFGDYKKYSPEFEDCKKVAQELKIPLSKVYDAVNKAILVFEERNENALQ</sequence>
<protein>
    <recommendedName>
        <fullName evidence="1">Pyridinium-3,5-bisthiocarboxylic acid mononucleotide nickel insertion protein</fullName>
        <shortName evidence="1">P2TMN nickel insertion protein</shortName>
        <ecNumber evidence="1">4.99.1.12</ecNumber>
    </recommendedName>
    <alternativeName>
        <fullName evidence="1">Nickel-pincer cofactor biosynthesis protein LarC</fullName>
    </alternativeName>
</protein>
<evidence type="ECO:0000255" key="1">
    <source>
        <dbReference type="HAMAP-Rule" id="MF_01074"/>
    </source>
</evidence>
<proteinExistence type="inferred from homology"/>
<gene>
    <name evidence="1" type="primary">larC</name>
    <name type="ordered locus">Cthe_0369</name>
</gene>
<organism>
    <name type="scientific">Acetivibrio thermocellus (strain ATCC 27405 / DSM 1237 / JCM 9322 / NBRC 103400 / NCIMB 10682 / NRRL B-4536 / VPI 7372)</name>
    <name type="common">Clostridium thermocellum</name>
    <dbReference type="NCBI Taxonomy" id="203119"/>
    <lineage>
        <taxon>Bacteria</taxon>
        <taxon>Bacillati</taxon>
        <taxon>Bacillota</taxon>
        <taxon>Clostridia</taxon>
        <taxon>Eubacteriales</taxon>
        <taxon>Oscillospiraceae</taxon>
        <taxon>Acetivibrio</taxon>
    </lineage>
</organism>
<reference key="1">
    <citation type="submission" date="2007-02" db="EMBL/GenBank/DDBJ databases">
        <title>Complete sequence of Clostridium thermocellum ATCC 27405.</title>
        <authorList>
            <consortium name="US DOE Joint Genome Institute"/>
            <person name="Copeland A."/>
            <person name="Lucas S."/>
            <person name="Lapidus A."/>
            <person name="Barry K."/>
            <person name="Detter J.C."/>
            <person name="Glavina del Rio T."/>
            <person name="Hammon N."/>
            <person name="Israni S."/>
            <person name="Dalin E."/>
            <person name="Tice H."/>
            <person name="Pitluck S."/>
            <person name="Chertkov O."/>
            <person name="Brettin T."/>
            <person name="Bruce D."/>
            <person name="Han C."/>
            <person name="Tapia R."/>
            <person name="Gilna P."/>
            <person name="Schmutz J."/>
            <person name="Larimer F."/>
            <person name="Land M."/>
            <person name="Hauser L."/>
            <person name="Kyrpides N."/>
            <person name="Mikhailova N."/>
            <person name="Wu J.H.D."/>
            <person name="Newcomb M."/>
            <person name="Richardson P."/>
        </authorList>
    </citation>
    <scope>NUCLEOTIDE SEQUENCE [LARGE SCALE GENOMIC DNA]</scope>
    <source>
        <strain>ATCC 27405 / DSM 1237 / JCM 9322 / NBRC 103400 / NCIMB 10682 / NRRL B-4536 / VPI 7372</strain>
    </source>
</reference>